<organism>
    <name type="scientific">Oryza sativa subsp. japonica</name>
    <name type="common">Rice</name>
    <dbReference type="NCBI Taxonomy" id="39947"/>
    <lineage>
        <taxon>Eukaryota</taxon>
        <taxon>Viridiplantae</taxon>
        <taxon>Streptophyta</taxon>
        <taxon>Embryophyta</taxon>
        <taxon>Tracheophyta</taxon>
        <taxon>Spermatophyta</taxon>
        <taxon>Magnoliopsida</taxon>
        <taxon>Liliopsida</taxon>
        <taxon>Poales</taxon>
        <taxon>Poaceae</taxon>
        <taxon>BOP clade</taxon>
        <taxon>Oryzoideae</taxon>
        <taxon>Oryzeae</taxon>
        <taxon>Oryzinae</taxon>
        <taxon>Oryza</taxon>
        <taxon>Oryza sativa</taxon>
    </lineage>
</organism>
<proteinExistence type="evidence at transcript level"/>
<comment type="function">
    <text>Nitrate reductase is a key enzyme involved in the first step of nitrate assimilation in plants, fungi and bacteria.</text>
</comment>
<comment type="catalytic activity">
    <reaction>
        <text>nitrite + NAD(+) + H2O = nitrate + NADH + H(+)</text>
        <dbReference type="Rhea" id="RHEA:17913"/>
        <dbReference type="ChEBI" id="CHEBI:15377"/>
        <dbReference type="ChEBI" id="CHEBI:15378"/>
        <dbReference type="ChEBI" id="CHEBI:16301"/>
        <dbReference type="ChEBI" id="CHEBI:17632"/>
        <dbReference type="ChEBI" id="CHEBI:57540"/>
        <dbReference type="ChEBI" id="CHEBI:57945"/>
        <dbReference type="EC" id="1.7.1.1"/>
    </reaction>
</comment>
<comment type="cofactor">
    <cofactor evidence="1">
        <name>FAD</name>
        <dbReference type="ChEBI" id="CHEBI:57692"/>
    </cofactor>
    <text evidence="1">Binds 1 FAD per subunit.</text>
</comment>
<comment type="cofactor">
    <cofactor evidence="1">
        <name>heme</name>
        <dbReference type="ChEBI" id="CHEBI:30413"/>
    </cofactor>
    <text evidence="1">Binds 1 heme group per subunit.</text>
</comment>
<comment type="cofactor">
    <cofactor evidence="1">
        <name>Mo-molybdopterin</name>
        <dbReference type="ChEBI" id="CHEBI:71302"/>
    </cofactor>
    <text evidence="1">Binds 1 Mo-molybdopterin (Mo-MPT) cofactor per subunit.</text>
</comment>
<comment type="subunit">
    <text>Homodimer.</text>
</comment>
<comment type="similarity">
    <text evidence="9">Belongs to the nitrate reductase family.</text>
</comment>
<dbReference type="EC" id="1.7.1.1"/>
<dbReference type="EMBL" id="X15819">
    <property type="protein sequence ID" value="CAA33817.2"/>
    <property type="molecule type" value="Genomic_DNA"/>
</dbReference>
<dbReference type="EMBL" id="X15820">
    <property type="protein sequence ID" value="CAA33817.2"/>
    <property type="status" value="JOINED"/>
    <property type="molecule type" value="Genomic_DNA"/>
</dbReference>
<dbReference type="EMBL" id="AP004585">
    <property type="protein sequence ID" value="BAD09558.1"/>
    <property type="molecule type" value="Genomic_DNA"/>
</dbReference>
<dbReference type="EMBL" id="AP008214">
    <property type="protein sequence ID" value="BAF23920.1"/>
    <property type="molecule type" value="Genomic_DNA"/>
</dbReference>
<dbReference type="EMBL" id="AP014964">
    <property type="protein sequence ID" value="BAT05814.1"/>
    <property type="molecule type" value="Genomic_DNA"/>
</dbReference>
<dbReference type="EMBL" id="CM000145">
    <property type="protein sequence ID" value="EAZ43035.1"/>
    <property type="molecule type" value="Genomic_DNA"/>
</dbReference>
<dbReference type="EMBL" id="AK121810">
    <property type="status" value="NOT_ANNOTATED_CDS"/>
    <property type="molecule type" value="mRNA"/>
</dbReference>
<dbReference type="PIR" id="S07554">
    <property type="entry name" value="S07554"/>
</dbReference>
<dbReference type="RefSeq" id="XP_015650300.1">
    <property type="nucleotide sequence ID" value="XM_015794814.1"/>
</dbReference>
<dbReference type="SMR" id="P16081"/>
<dbReference type="FunCoup" id="P16081">
    <property type="interactions" value="28"/>
</dbReference>
<dbReference type="STRING" id="39947.P16081"/>
<dbReference type="iPTMnet" id="P16081"/>
<dbReference type="PaxDb" id="39947-P16081"/>
<dbReference type="EnsemblPlants" id="Os08t0468100-01">
    <property type="protein sequence ID" value="Os08t0468100-01"/>
    <property type="gene ID" value="Os08g0468100"/>
</dbReference>
<dbReference type="Gramene" id="Os08t0468100-01">
    <property type="protein sequence ID" value="Os08t0468100-01"/>
    <property type="gene ID" value="Os08g0468100"/>
</dbReference>
<dbReference type="KEGG" id="dosa:Os08g0468100"/>
<dbReference type="eggNOG" id="KOG0534">
    <property type="taxonomic scope" value="Eukaryota"/>
</dbReference>
<dbReference type="eggNOG" id="KOG0535">
    <property type="taxonomic scope" value="Eukaryota"/>
</dbReference>
<dbReference type="eggNOG" id="KOG0537">
    <property type="taxonomic scope" value="Eukaryota"/>
</dbReference>
<dbReference type="InParanoid" id="P16081"/>
<dbReference type="OMA" id="MNNCWYT"/>
<dbReference type="OrthoDB" id="432685at2759"/>
<dbReference type="PlantReactome" id="R-OSA-1119291">
    <property type="pathway name" value="Nitrate assimilation"/>
</dbReference>
<dbReference type="Proteomes" id="UP000000763">
    <property type="component" value="Chromosome 8"/>
</dbReference>
<dbReference type="Proteomes" id="UP000007752">
    <property type="component" value="Chromosome 8"/>
</dbReference>
<dbReference type="Proteomes" id="UP000059680">
    <property type="component" value="Chromosome 8"/>
</dbReference>
<dbReference type="ExpressionAtlas" id="P16081">
    <property type="expression patterns" value="baseline and differential"/>
</dbReference>
<dbReference type="GO" id="GO:0031090">
    <property type="term" value="C:organelle membrane"/>
    <property type="evidence" value="ECO:0007669"/>
    <property type="project" value="UniProtKB-ARBA"/>
</dbReference>
<dbReference type="GO" id="GO:0071949">
    <property type="term" value="F:FAD binding"/>
    <property type="evidence" value="ECO:0000250"/>
    <property type="project" value="UniProtKB"/>
</dbReference>
<dbReference type="GO" id="GO:0020037">
    <property type="term" value="F:heme binding"/>
    <property type="evidence" value="ECO:0007669"/>
    <property type="project" value="InterPro"/>
</dbReference>
<dbReference type="GO" id="GO:0030151">
    <property type="term" value="F:molybdenum ion binding"/>
    <property type="evidence" value="ECO:0000250"/>
    <property type="project" value="UniProtKB"/>
</dbReference>
<dbReference type="GO" id="GO:0043546">
    <property type="term" value="F:molybdopterin cofactor binding"/>
    <property type="evidence" value="ECO:0007669"/>
    <property type="project" value="InterPro"/>
</dbReference>
<dbReference type="GO" id="GO:0009703">
    <property type="term" value="F:nitrate reductase (NADH) activity"/>
    <property type="evidence" value="ECO:0000318"/>
    <property type="project" value="GO_Central"/>
</dbReference>
<dbReference type="GO" id="GO:0050464">
    <property type="term" value="F:nitrate reductase (NADPH) activity"/>
    <property type="evidence" value="ECO:0007669"/>
    <property type="project" value="InterPro"/>
</dbReference>
<dbReference type="GO" id="GO:0042128">
    <property type="term" value="P:nitrate assimilation"/>
    <property type="evidence" value="ECO:0000318"/>
    <property type="project" value="GO_Central"/>
</dbReference>
<dbReference type="GO" id="GO:0006809">
    <property type="term" value="P:nitric oxide biosynthetic process"/>
    <property type="evidence" value="ECO:0000318"/>
    <property type="project" value="GO_Central"/>
</dbReference>
<dbReference type="CDD" id="cd06183">
    <property type="entry name" value="cyt_b5_reduct_like"/>
    <property type="match status" value="1"/>
</dbReference>
<dbReference type="CDD" id="cd02112">
    <property type="entry name" value="eukary_NR_Moco"/>
    <property type="match status" value="1"/>
</dbReference>
<dbReference type="FunFam" id="2.40.30.10:FF:000021">
    <property type="entry name" value="NADH-cytochrome b5 reductase"/>
    <property type="match status" value="1"/>
</dbReference>
<dbReference type="FunFam" id="2.60.40.650:FF:000001">
    <property type="entry name" value="Nitrate reductase"/>
    <property type="match status" value="1"/>
</dbReference>
<dbReference type="FunFam" id="3.10.120.10:FF:000008">
    <property type="entry name" value="Nitrate reductase"/>
    <property type="match status" value="1"/>
</dbReference>
<dbReference type="FunFam" id="3.90.420.10:FF:000003">
    <property type="entry name" value="Nitrate reductase"/>
    <property type="match status" value="1"/>
</dbReference>
<dbReference type="FunFam" id="3.40.50.80:FF:000025">
    <property type="entry name" value="Nitrate reductase [NADH]"/>
    <property type="match status" value="1"/>
</dbReference>
<dbReference type="Gene3D" id="2.60.40.650">
    <property type="match status" value="1"/>
</dbReference>
<dbReference type="Gene3D" id="3.10.120.10">
    <property type="entry name" value="Cytochrome b5-like heme/steroid binding domain"/>
    <property type="match status" value="1"/>
</dbReference>
<dbReference type="Gene3D" id="3.40.50.80">
    <property type="entry name" value="Nucleotide-binding domain of ferredoxin-NADP reductase (FNR) module"/>
    <property type="match status" value="1"/>
</dbReference>
<dbReference type="Gene3D" id="3.90.420.10">
    <property type="entry name" value="Oxidoreductase, molybdopterin-binding domain"/>
    <property type="match status" value="1"/>
</dbReference>
<dbReference type="Gene3D" id="2.40.30.10">
    <property type="entry name" value="Translation factors"/>
    <property type="match status" value="1"/>
</dbReference>
<dbReference type="InterPro" id="IPR008333">
    <property type="entry name" value="Cbr1-like_FAD-bd_dom"/>
</dbReference>
<dbReference type="InterPro" id="IPR001199">
    <property type="entry name" value="Cyt_B5-like_heme/steroid-bd"/>
</dbReference>
<dbReference type="InterPro" id="IPR036400">
    <property type="entry name" value="Cyt_B5-like_heme/steroid_sf"/>
</dbReference>
<dbReference type="InterPro" id="IPR018506">
    <property type="entry name" value="Cyt_B5_heme-BS"/>
</dbReference>
<dbReference type="InterPro" id="IPR017927">
    <property type="entry name" value="FAD-bd_FR_type"/>
</dbReference>
<dbReference type="InterPro" id="IPR001709">
    <property type="entry name" value="Flavoprot_Pyr_Nucl_cyt_Rdtase"/>
</dbReference>
<dbReference type="InterPro" id="IPR039261">
    <property type="entry name" value="FNR_nucleotide-bd"/>
</dbReference>
<dbReference type="InterPro" id="IPR014756">
    <property type="entry name" value="Ig_E-set"/>
</dbReference>
<dbReference type="InterPro" id="IPR005066">
    <property type="entry name" value="MoCF_OxRdtse_dimer"/>
</dbReference>
<dbReference type="InterPro" id="IPR008335">
    <property type="entry name" value="Mopterin_OxRdtase_euk"/>
</dbReference>
<dbReference type="InterPro" id="IPR012137">
    <property type="entry name" value="Nitr_rd_NADH"/>
</dbReference>
<dbReference type="InterPro" id="IPR001433">
    <property type="entry name" value="OxRdtase_FAD/NAD-bd"/>
</dbReference>
<dbReference type="InterPro" id="IPR000572">
    <property type="entry name" value="OxRdtase_Mopterin-bd_dom"/>
</dbReference>
<dbReference type="InterPro" id="IPR036374">
    <property type="entry name" value="OxRdtase_Mopterin-bd_sf"/>
</dbReference>
<dbReference type="InterPro" id="IPR022407">
    <property type="entry name" value="OxRdtase_Mopterin_BS"/>
</dbReference>
<dbReference type="InterPro" id="IPR017938">
    <property type="entry name" value="Riboflavin_synthase-like_b-brl"/>
</dbReference>
<dbReference type="PANTHER" id="PTHR19372:SF16">
    <property type="entry name" value="NITRATE REDUCTASE"/>
    <property type="match status" value="1"/>
</dbReference>
<dbReference type="PANTHER" id="PTHR19372">
    <property type="entry name" value="SULFITE REDUCTASE"/>
    <property type="match status" value="1"/>
</dbReference>
<dbReference type="Pfam" id="PF00173">
    <property type="entry name" value="Cyt-b5"/>
    <property type="match status" value="1"/>
</dbReference>
<dbReference type="Pfam" id="PF00970">
    <property type="entry name" value="FAD_binding_6"/>
    <property type="match status" value="1"/>
</dbReference>
<dbReference type="Pfam" id="PF03404">
    <property type="entry name" value="Mo-co_dimer"/>
    <property type="match status" value="1"/>
</dbReference>
<dbReference type="Pfam" id="PF00175">
    <property type="entry name" value="NAD_binding_1"/>
    <property type="match status" value="1"/>
</dbReference>
<dbReference type="Pfam" id="PF00174">
    <property type="entry name" value="Oxidored_molyb"/>
    <property type="match status" value="1"/>
</dbReference>
<dbReference type="PIRSF" id="PIRSF000233">
    <property type="entry name" value="Nitr_rd_NADH"/>
    <property type="match status" value="1"/>
</dbReference>
<dbReference type="PRINTS" id="PR00406">
    <property type="entry name" value="CYTB5RDTASE"/>
</dbReference>
<dbReference type="PRINTS" id="PR00363">
    <property type="entry name" value="CYTOCHROMEB5"/>
</dbReference>
<dbReference type="PRINTS" id="PR00407">
    <property type="entry name" value="EUMOPTERIN"/>
</dbReference>
<dbReference type="PRINTS" id="PR00371">
    <property type="entry name" value="FPNCR"/>
</dbReference>
<dbReference type="SMART" id="SM01117">
    <property type="entry name" value="Cyt-b5"/>
    <property type="match status" value="1"/>
</dbReference>
<dbReference type="SUPFAM" id="SSF55856">
    <property type="entry name" value="Cytochrome b5-like heme/steroid binding domain"/>
    <property type="match status" value="1"/>
</dbReference>
<dbReference type="SUPFAM" id="SSF81296">
    <property type="entry name" value="E set domains"/>
    <property type="match status" value="1"/>
</dbReference>
<dbReference type="SUPFAM" id="SSF52343">
    <property type="entry name" value="Ferredoxin reductase-like, C-terminal NADP-linked domain"/>
    <property type="match status" value="1"/>
</dbReference>
<dbReference type="SUPFAM" id="SSF56524">
    <property type="entry name" value="Oxidoreductase molybdopterin-binding domain"/>
    <property type="match status" value="1"/>
</dbReference>
<dbReference type="SUPFAM" id="SSF63380">
    <property type="entry name" value="Riboflavin synthase domain-like"/>
    <property type="match status" value="1"/>
</dbReference>
<dbReference type="PROSITE" id="PS00191">
    <property type="entry name" value="CYTOCHROME_B5_1"/>
    <property type="match status" value="1"/>
</dbReference>
<dbReference type="PROSITE" id="PS50255">
    <property type="entry name" value="CYTOCHROME_B5_2"/>
    <property type="match status" value="1"/>
</dbReference>
<dbReference type="PROSITE" id="PS51384">
    <property type="entry name" value="FAD_FR"/>
    <property type="match status" value="1"/>
</dbReference>
<dbReference type="PROSITE" id="PS00559">
    <property type="entry name" value="MOLYBDOPTERIN_EUK"/>
    <property type="match status" value="1"/>
</dbReference>
<keyword id="KW-1015">Disulfide bond</keyword>
<keyword id="KW-0274">FAD</keyword>
<keyword id="KW-0285">Flavoprotein</keyword>
<keyword id="KW-0349">Heme</keyword>
<keyword id="KW-0408">Iron</keyword>
<keyword id="KW-0479">Metal-binding</keyword>
<keyword id="KW-0500">Molybdenum</keyword>
<keyword id="KW-0520">NAD</keyword>
<keyword id="KW-0534">Nitrate assimilation</keyword>
<keyword id="KW-0560">Oxidoreductase</keyword>
<keyword id="KW-1185">Reference proteome</keyword>
<reference key="1">
    <citation type="journal article" date="1989" name="Plant Mol. Biol.">
        <title>Nucleotide sequence of rice nitrate reductase genes.</title>
        <authorList>
            <person name="Cheng C."/>
            <person name="Dewdney J."/>
            <person name="Nam H."/>
            <person name="den Boer B.G.W."/>
            <person name="Goodman H.M."/>
            <person name="Choi H.K."/>
            <person name="Kleinhofs A."/>
            <person name="An G."/>
        </authorList>
    </citation>
    <scope>NUCLEOTIDE SEQUENCE [GENOMIC DNA]</scope>
    <source>
        <strain>cv. Biggs M-201</strain>
    </source>
</reference>
<reference key="2">
    <citation type="journal article" date="2005" name="Nature">
        <title>The map-based sequence of the rice genome.</title>
        <authorList>
            <consortium name="International rice genome sequencing project (IRGSP)"/>
        </authorList>
    </citation>
    <scope>NUCLEOTIDE SEQUENCE [LARGE SCALE GENOMIC DNA]</scope>
    <source>
        <strain>cv. Nipponbare</strain>
    </source>
</reference>
<reference key="3">
    <citation type="journal article" date="2008" name="Nucleic Acids Res.">
        <title>The rice annotation project database (RAP-DB): 2008 update.</title>
        <authorList>
            <consortium name="The rice annotation project (RAP)"/>
        </authorList>
    </citation>
    <scope>GENOME REANNOTATION</scope>
    <source>
        <strain>cv. Nipponbare</strain>
    </source>
</reference>
<reference key="4">
    <citation type="journal article" date="2013" name="Rice">
        <title>Improvement of the Oryza sativa Nipponbare reference genome using next generation sequence and optical map data.</title>
        <authorList>
            <person name="Kawahara Y."/>
            <person name="de la Bastide M."/>
            <person name="Hamilton J.P."/>
            <person name="Kanamori H."/>
            <person name="McCombie W.R."/>
            <person name="Ouyang S."/>
            <person name="Schwartz D.C."/>
            <person name="Tanaka T."/>
            <person name="Wu J."/>
            <person name="Zhou S."/>
            <person name="Childs K.L."/>
            <person name="Davidson R.M."/>
            <person name="Lin H."/>
            <person name="Quesada-Ocampo L."/>
            <person name="Vaillancourt B."/>
            <person name="Sakai H."/>
            <person name="Lee S.S."/>
            <person name="Kim J."/>
            <person name="Numa H."/>
            <person name="Itoh T."/>
            <person name="Buell C.R."/>
            <person name="Matsumoto T."/>
        </authorList>
    </citation>
    <scope>GENOME REANNOTATION</scope>
    <source>
        <strain>cv. Nipponbare</strain>
    </source>
</reference>
<reference key="5">
    <citation type="journal article" date="2005" name="PLoS Biol.">
        <title>The genomes of Oryza sativa: a history of duplications.</title>
        <authorList>
            <person name="Yu J."/>
            <person name="Wang J."/>
            <person name="Lin W."/>
            <person name="Li S."/>
            <person name="Li H."/>
            <person name="Zhou J."/>
            <person name="Ni P."/>
            <person name="Dong W."/>
            <person name="Hu S."/>
            <person name="Zeng C."/>
            <person name="Zhang J."/>
            <person name="Zhang Y."/>
            <person name="Li R."/>
            <person name="Xu Z."/>
            <person name="Li S."/>
            <person name="Li X."/>
            <person name="Zheng H."/>
            <person name="Cong L."/>
            <person name="Lin L."/>
            <person name="Yin J."/>
            <person name="Geng J."/>
            <person name="Li G."/>
            <person name="Shi J."/>
            <person name="Liu J."/>
            <person name="Lv H."/>
            <person name="Li J."/>
            <person name="Wang J."/>
            <person name="Deng Y."/>
            <person name="Ran L."/>
            <person name="Shi X."/>
            <person name="Wang X."/>
            <person name="Wu Q."/>
            <person name="Li C."/>
            <person name="Ren X."/>
            <person name="Wang J."/>
            <person name="Wang X."/>
            <person name="Li D."/>
            <person name="Liu D."/>
            <person name="Zhang X."/>
            <person name="Ji Z."/>
            <person name="Zhao W."/>
            <person name="Sun Y."/>
            <person name="Zhang Z."/>
            <person name="Bao J."/>
            <person name="Han Y."/>
            <person name="Dong L."/>
            <person name="Ji J."/>
            <person name="Chen P."/>
            <person name="Wu S."/>
            <person name="Liu J."/>
            <person name="Xiao Y."/>
            <person name="Bu D."/>
            <person name="Tan J."/>
            <person name="Yang L."/>
            <person name="Ye C."/>
            <person name="Zhang J."/>
            <person name="Xu J."/>
            <person name="Zhou Y."/>
            <person name="Yu Y."/>
            <person name="Zhang B."/>
            <person name="Zhuang S."/>
            <person name="Wei H."/>
            <person name="Liu B."/>
            <person name="Lei M."/>
            <person name="Yu H."/>
            <person name="Li Y."/>
            <person name="Xu H."/>
            <person name="Wei S."/>
            <person name="He X."/>
            <person name="Fang L."/>
            <person name="Zhang Z."/>
            <person name="Zhang Y."/>
            <person name="Huang X."/>
            <person name="Su Z."/>
            <person name="Tong W."/>
            <person name="Li J."/>
            <person name="Tong Z."/>
            <person name="Li S."/>
            <person name="Ye J."/>
            <person name="Wang L."/>
            <person name="Fang L."/>
            <person name="Lei T."/>
            <person name="Chen C.-S."/>
            <person name="Chen H.-C."/>
            <person name="Xu Z."/>
            <person name="Li H."/>
            <person name="Huang H."/>
            <person name="Zhang F."/>
            <person name="Xu H."/>
            <person name="Li N."/>
            <person name="Zhao C."/>
            <person name="Li S."/>
            <person name="Dong L."/>
            <person name="Huang Y."/>
            <person name="Li L."/>
            <person name="Xi Y."/>
            <person name="Qi Q."/>
            <person name="Li W."/>
            <person name="Zhang B."/>
            <person name="Hu W."/>
            <person name="Zhang Y."/>
            <person name="Tian X."/>
            <person name="Jiao Y."/>
            <person name="Liang X."/>
            <person name="Jin J."/>
            <person name="Gao L."/>
            <person name="Zheng W."/>
            <person name="Hao B."/>
            <person name="Liu S.-M."/>
            <person name="Wang W."/>
            <person name="Yuan L."/>
            <person name="Cao M."/>
            <person name="McDermott J."/>
            <person name="Samudrala R."/>
            <person name="Wang J."/>
            <person name="Wong G.K.-S."/>
            <person name="Yang H."/>
        </authorList>
    </citation>
    <scope>NUCLEOTIDE SEQUENCE [LARGE SCALE GENOMIC DNA]</scope>
    <source>
        <strain>cv. Nipponbare</strain>
    </source>
</reference>
<reference key="6">
    <citation type="journal article" date="2003" name="Science">
        <title>Collection, mapping, and annotation of over 28,000 cDNA clones from japonica rice.</title>
        <authorList>
            <consortium name="The rice full-length cDNA consortium"/>
        </authorList>
    </citation>
    <scope>NUCLEOTIDE SEQUENCE [LARGE SCALE MRNA]</scope>
    <source>
        <strain>cv. Nipponbare</strain>
    </source>
</reference>
<evidence type="ECO:0000250" key="1"/>
<evidence type="ECO:0000250" key="2">
    <source>
        <dbReference type="UniProtKB" id="A0A286R227"/>
    </source>
</evidence>
<evidence type="ECO:0000250" key="3">
    <source>
        <dbReference type="UniProtKB" id="P17571"/>
    </source>
</evidence>
<evidence type="ECO:0000250" key="4">
    <source>
        <dbReference type="UniProtKB" id="P49050"/>
    </source>
</evidence>
<evidence type="ECO:0000255" key="5"/>
<evidence type="ECO:0000255" key="6">
    <source>
        <dbReference type="PROSITE-ProRule" id="PRU00279"/>
    </source>
</evidence>
<evidence type="ECO:0000255" key="7">
    <source>
        <dbReference type="PROSITE-ProRule" id="PRU00716"/>
    </source>
</evidence>
<evidence type="ECO:0000256" key="8">
    <source>
        <dbReference type="SAM" id="MobiDB-lite"/>
    </source>
</evidence>
<evidence type="ECO:0000305" key="9"/>
<evidence type="ECO:0000312" key="10">
    <source>
        <dbReference type="EMBL" id="BAF23920.1"/>
    </source>
</evidence>
<evidence type="ECO:0000312" key="11">
    <source>
        <dbReference type="EMBL" id="EAZ43035.1"/>
    </source>
</evidence>
<protein>
    <recommendedName>
        <fullName>Nitrate reductase [NADH] 1</fullName>
        <shortName>NR1</shortName>
        <ecNumber>1.7.1.1</ecNumber>
    </recommendedName>
</protein>
<gene>
    <name type="primary">NIA1</name>
    <name evidence="10" type="ordered locus">Os08g0468100</name>
    <name evidence="9" type="ordered locus">LOC_Os08g36480</name>
    <name evidence="11" type="ORF">OsJ_27622</name>
    <name type="ORF">P0470B03.25</name>
</gene>
<name>NIA1_ORYSJ</name>
<feature type="chain" id="PRO_0000166065" description="Nitrate reductase [NADH] 1">
    <location>
        <begin position="1"/>
        <end position="916"/>
    </location>
</feature>
<feature type="domain" description="Cytochrome b5 heme-binding" evidence="6">
    <location>
        <begin position="541"/>
        <end position="616"/>
    </location>
</feature>
<feature type="domain" description="FAD-binding FR-type" evidence="7">
    <location>
        <begin position="656"/>
        <end position="768"/>
    </location>
</feature>
<feature type="region of interest" description="Disordered" evidence="8">
    <location>
        <begin position="1"/>
        <end position="77"/>
    </location>
</feature>
<feature type="compositionally biased region" description="Acidic residues" evidence="8">
    <location>
        <begin position="66"/>
        <end position="76"/>
    </location>
</feature>
<feature type="binding site" evidence="4">
    <location>
        <position position="192"/>
    </location>
    <ligand>
        <name>Mo-molybdopterin</name>
        <dbReference type="ChEBI" id="CHEBI:71302"/>
    </ligand>
    <ligandPart>
        <name>Mo</name>
        <dbReference type="ChEBI" id="CHEBI:28685"/>
    </ligandPart>
</feature>
<feature type="binding site" description="axial binding residue" evidence="6">
    <location>
        <position position="576"/>
    </location>
    <ligand>
        <name>heme</name>
        <dbReference type="ChEBI" id="CHEBI:30413"/>
    </ligand>
    <ligandPart>
        <name>Fe</name>
        <dbReference type="ChEBI" id="CHEBI:18248"/>
    </ligandPart>
</feature>
<feature type="binding site" description="axial binding residue" evidence="6">
    <location>
        <position position="599"/>
    </location>
    <ligand>
        <name>heme</name>
        <dbReference type="ChEBI" id="CHEBI:30413"/>
    </ligand>
    <ligandPart>
        <name>Fe</name>
        <dbReference type="ChEBI" id="CHEBI:18248"/>
    </ligandPart>
</feature>
<feature type="binding site" evidence="2">
    <location>
        <begin position="708"/>
        <end position="711"/>
    </location>
    <ligand>
        <name>FAD</name>
        <dbReference type="ChEBI" id="CHEBI:57692"/>
    </ligand>
</feature>
<feature type="binding site" evidence="2">
    <location>
        <begin position="725"/>
        <end position="729"/>
    </location>
    <ligand>
        <name>FAD</name>
        <dbReference type="ChEBI" id="CHEBI:57692"/>
    </ligand>
</feature>
<feature type="binding site" evidence="3">
    <location>
        <position position="730"/>
    </location>
    <ligand>
        <name>FAD</name>
        <dbReference type="ChEBI" id="CHEBI:57692"/>
    </ligand>
</feature>
<feature type="binding site" evidence="2">
    <location>
        <position position="737"/>
    </location>
    <ligand>
        <name>FAD</name>
        <dbReference type="ChEBI" id="CHEBI:57692"/>
    </ligand>
</feature>
<feature type="binding site" evidence="2">
    <location>
        <begin position="742"/>
        <end position="744"/>
    </location>
    <ligand>
        <name>FAD</name>
        <dbReference type="ChEBI" id="CHEBI:57692"/>
    </ligand>
</feature>
<feature type="binding site" evidence="3">
    <location>
        <position position="792"/>
    </location>
    <ligand>
        <name>FAD</name>
        <dbReference type="ChEBI" id="CHEBI:57692"/>
    </ligand>
</feature>
<feature type="binding site" evidence="2">
    <location>
        <position position="795"/>
    </location>
    <ligand>
        <name>FAD</name>
        <dbReference type="ChEBI" id="CHEBI:57692"/>
    </ligand>
</feature>
<feature type="disulfide bond" description="Interchain" evidence="5">
    <location>
        <position position="431"/>
    </location>
</feature>
<feature type="sequence conflict" description="In Ref. 1; CAA33817." evidence="9" ref="1">
    <original>D</original>
    <variation>N</variation>
    <location>
        <position position="98"/>
    </location>
</feature>
<feature type="sequence conflict" description="In Ref. 1; CAA33817." evidence="9" ref="1">
    <original>I</original>
    <variation>T</variation>
    <location>
        <position position="106"/>
    </location>
</feature>
<feature type="sequence conflict" description="In Ref. 1; CAA33817." evidence="9" ref="1">
    <original>R</original>
    <variation>E</variation>
    <location>
        <position position="129"/>
    </location>
</feature>
<feature type="sequence conflict" description="In Ref. 1; CAA33817." evidence="9" ref="1">
    <original>R</original>
    <variation>A</variation>
    <location>
        <position position="145"/>
    </location>
</feature>
<feature type="sequence conflict" description="In Ref. 6; AK121810." evidence="9" ref="6">
    <original>R</original>
    <variation>G</variation>
    <location>
        <position position="297"/>
    </location>
</feature>
<feature type="sequence conflict" description="In Ref. 1; CAA33817." evidence="9" ref="1">
    <original>H</original>
    <variation>Y</variation>
    <location>
        <position position="370"/>
    </location>
</feature>
<feature type="sequence conflict" description="In Ref. 1; CAA33817." evidence="9" ref="1">
    <original>C</original>
    <variation>R</variation>
    <location>
        <position position="433"/>
    </location>
</feature>
<feature type="sequence conflict" description="In Ref. 1; CAA33817." evidence="9" ref="1">
    <original>S</original>
    <variation>P</variation>
    <location>
        <position position="436"/>
    </location>
</feature>
<feature type="sequence conflict" description="In Ref. 1; CAA33817." evidence="9" ref="1">
    <original>L</original>
    <variation>F</variation>
    <location>
        <position position="442"/>
    </location>
</feature>
<feature type="sequence conflict" description="In Ref. 1; CAA33817." evidence="9" ref="1">
    <original>V</original>
    <variation>A</variation>
    <location>
        <position position="452"/>
    </location>
</feature>
<feature type="sequence conflict" description="In Ref. 6; AK121810." evidence="9" ref="6">
    <original>D</original>
    <variation>N</variation>
    <location>
        <position position="581"/>
    </location>
</feature>
<accession>P16081</accession>
<accession>A0A0P0XHA0</accession>
<accession>Q0J545</accession>
<accession>Q6ZC37</accession>
<sequence length="916" mass="101513">MAASVQPRQFGHLEPGSAPVRGAASSNGAKAYPPANGIPRRADSPVRGCGFPPLVSPPPRKPPSDGSDDEEEEQEDWRELYGSHLQLEVEPPVRDARDEGTADAWIERNPSLIRLTGKHPLNCEPPLARLMHHGFITPAALHYVRNHGAVPRGDWSTWTVDVTGLVKRPMRLTMDELVNGFPAVEIPVTLVCAGNRRKEQNMVQQTVGFNWGAAGVSTSVWRGARLRDVLRRCGIMPSKGGALNVCFEGAEDLPGGGGSKYGTSITRQWALDPSRDIMLAYMQNGEPLLPDHGFPVRAIIPGCIGGRMVKWVKRIIVTTAESDNYYHYKDNRVLPSHVDAELANADAWWYKPEYIINELNVNSVITTPGHDEILPINGITTQRGYTMKGYAYSGGGKRITRVEVTLDGGETWLVCVLDLPEKPTKYGKHWCWCFWSVEVEVLDLLGAKEIAVRAWDQSHNTQPEKLIWNLMGMMNNCWFKVKVNVCRPHKGEIGLVFEHPTQPGNQTGGWMARQKHLETAEAAAPGLKRSTSTPFMNTTDGKQFTMSEVRKHSSQDSAWIVVHGHVYDCTAFLKDHPGGADSILINAGTDCTEEFDAIHSDKAKALLDTYRIGELITTGAGYSSDNSVHGASNLSQLAPIREAIKAPAPVALSSPRDKVPCQLVDKKELSRDVRLFRFALPSSDQVLGLPVGKHIFVCASIEGKLCMRAYTPTSMVDEVGHFDLLIKVYFKNEHPKFPDGGLMTQYLDSLPVGAYIDVKGPLGHVEYTGRGEFVINGKPRNARRLAMIAGGSGITPMYQVIQSVLRDQPEDTTEMHLVYANRTEDDILLRDELDRWAAEYPDRLKVWYVIDQVKRPEEGWKYGVGFVTEEVLREHVPEGGDDTLALACGPPPMIKFAVSPNLEKMKYDMANSFIVF</sequence>